<organism>
    <name type="scientific">Xenopus laevis</name>
    <name type="common">African clawed frog</name>
    <dbReference type="NCBI Taxonomy" id="8355"/>
    <lineage>
        <taxon>Eukaryota</taxon>
        <taxon>Metazoa</taxon>
        <taxon>Chordata</taxon>
        <taxon>Craniata</taxon>
        <taxon>Vertebrata</taxon>
        <taxon>Euteleostomi</taxon>
        <taxon>Amphibia</taxon>
        <taxon>Batrachia</taxon>
        <taxon>Anura</taxon>
        <taxon>Pipoidea</taxon>
        <taxon>Pipidae</taxon>
        <taxon>Xenopodinae</taxon>
        <taxon>Xenopus</taxon>
        <taxon>Xenopus</taxon>
    </lineage>
</organism>
<reference key="1">
    <citation type="submission" date="2003-01" db="EMBL/GenBank/DDBJ databases">
        <authorList>
            <consortium name="NIH - Xenopus Gene Collection (XGC) project"/>
        </authorList>
    </citation>
    <scope>NUCLEOTIDE SEQUENCE [LARGE SCALE MRNA]</scope>
    <source>
        <tissue>Embryo</tissue>
    </source>
</reference>
<name>CALRL_XENLA</name>
<evidence type="ECO:0000250" key="1">
    <source>
        <dbReference type="UniProtKB" id="Q16602"/>
    </source>
</evidence>
<evidence type="ECO:0000255" key="2"/>
<evidence type="ECO:0000305" key="3"/>
<feature type="signal peptide" evidence="2">
    <location>
        <begin position="1"/>
        <end position="33"/>
    </location>
</feature>
<feature type="chain" id="PRO_0000373836" description="Calcitonin gene-related peptide type 1 receptor">
    <location>
        <begin position="34"/>
        <end position="476"/>
    </location>
</feature>
<feature type="topological domain" description="Extracellular" evidence="3">
    <location>
        <begin position="34"/>
        <end position="154"/>
    </location>
</feature>
<feature type="transmembrane region" description="Helical; Name=1" evidence="1">
    <location>
        <begin position="155"/>
        <end position="179"/>
    </location>
</feature>
<feature type="topological domain" description="Cytoplasmic" evidence="3">
    <location>
        <begin position="180"/>
        <end position="190"/>
    </location>
</feature>
<feature type="transmembrane region" description="Helical; Name=2" evidence="1">
    <location>
        <begin position="191"/>
        <end position="213"/>
    </location>
</feature>
<feature type="topological domain" description="Extracellular" evidence="3">
    <location>
        <begin position="214"/>
        <end position="224"/>
    </location>
</feature>
<feature type="transmembrane region" description="Helical; Name=3" evidence="1">
    <location>
        <begin position="225"/>
        <end position="253"/>
    </location>
</feature>
<feature type="topological domain" description="Cytoplasmic" evidence="3">
    <location>
        <begin position="254"/>
        <end position="267"/>
    </location>
</feature>
<feature type="transmembrane region" description="Helical; Name=4" evidence="1">
    <location>
        <begin position="268"/>
        <end position="288"/>
    </location>
</feature>
<feature type="topological domain" description="Extracellular" evidence="3">
    <location>
        <begin position="289"/>
        <end position="304"/>
    </location>
</feature>
<feature type="transmembrane region" description="Helical; Name=5" evidence="1">
    <location>
        <begin position="305"/>
        <end position="329"/>
    </location>
</feature>
<feature type="topological domain" description="Cytoplasmic" evidence="3">
    <location>
        <begin position="330"/>
        <end position="344"/>
    </location>
</feature>
<feature type="transmembrane region" description="Helical; Name=6" evidence="1">
    <location>
        <begin position="345"/>
        <end position="366"/>
    </location>
</feature>
<feature type="topological domain" description="Extracellular" evidence="3">
    <location>
        <begin position="367"/>
        <end position="381"/>
    </location>
</feature>
<feature type="transmembrane region" description="Helical; Name=7" evidence="1">
    <location>
        <begin position="382"/>
        <end position="402"/>
    </location>
</feature>
<feature type="topological domain" description="Cytoplasmic" evidence="3">
    <location>
        <begin position="403"/>
        <end position="476"/>
    </location>
</feature>
<feature type="glycosylation site" description="N-linked (GlcNAc...) asparagine" evidence="2">
    <location>
        <position position="81"/>
    </location>
</feature>
<feature type="glycosylation site" description="N-linked (GlcNAc...) asparagine" evidence="2">
    <location>
        <position position="133"/>
    </location>
</feature>
<feature type="glycosylation site" description="N-linked (GlcNAc...) asparagine" evidence="2">
    <location>
        <position position="138"/>
    </location>
</feature>
<feature type="disulfide bond" evidence="1">
    <location>
        <begin position="63"/>
        <end position="89"/>
    </location>
</feature>
<feature type="disulfide bond" evidence="1">
    <location>
        <begin position="80"/>
        <end position="120"/>
    </location>
</feature>
<feature type="disulfide bond" evidence="1">
    <location>
        <begin position="103"/>
        <end position="142"/>
    </location>
</feature>
<protein>
    <recommendedName>
        <fullName>Calcitonin gene-related peptide type 1 receptor</fullName>
        <shortName>CGRP type 1 receptor</shortName>
    </recommendedName>
    <alternativeName>
        <fullName>Calcitonin receptor-like receptor</fullName>
    </alternativeName>
</protein>
<proteinExistence type="evidence at transcript level"/>
<keyword id="KW-1003">Cell membrane</keyword>
<keyword id="KW-1015">Disulfide bond</keyword>
<keyword id="KW-0297">G-protein coupled receptor</keyword>
<keyword id="KW-0325">Glycoprotein</keyword>
<keyword id="KW-0472">Membrane</keyword>
<keyword id="KW-0675">Receptor</keyword>
<keyword id="KW-1185">Reference proteome</keyword>
<keyword id="KW-0732">Signal</keyword>
<keyword id="KW-0807">Transducer</keyword>
<keyword id="KW-0812">Transmembrane</keyword>
<keyword id="KW-1133">Transmembrane helix</keyword>
<sequence>METLQMGLLSRSALFKYIIIFLIMINTRGYVLASQEQEAKTSVPEERQVGVTQNKIMTAQYECYQKIMQEPAHGKEGQFCNRTWDGWLCWGDVAAGIISEQRCPDYFQDFDPSEKVTKECGKNGHWFRHPDSNRTWTNYTRCNTFTHEKVKTALNLYYLTIIGHGLSIASLLISLGIFFYFKNLSCQRITLHKNLFFSFVCNSIITIISLSAVANNQALVATNPVICKISQFIHLYLMGCNYFWMLCEGIYLHTLIVVAVFAEKQHLMWYYLLGWGFPLIPACIHAVARSLYYNDNCWISSETHLLYIIHGPICAALLVNLFFLLNIVRVLITKLKVTHQAESNLYMKAVRATLILVPLLGIEFVLFPWKPEGRIAEEIYDYVMHILMHYQGLLVATIFCFFNGEVQAVLKRHWNQYRIQFGSFAHSEGLRSASYTVSSISEIQGTTYTHDYSEHSNGKNCHDMENVFFKTEKQYM</sequence>
<gene>
    <name type="primary">calcrl</name>
</gene>
<comment type="function">
    <text evidence="1">May function as G protein-coupled receptor for calcitonin-gene-related peptides and adrenomedullin (By similarity). Specificity may be modulated by accessory proteins (By similarity). May activate cAMP-dependent pathway (By similarity).</text>
</comment>
<comment type="subcellular location">
    <subcellularLocation>
        <location evidence="1">Cell membrane</location>
        <topology evidence="1">Multi-pass membrane protein</topology>
    </subcellularLocation>
</comment>
<comment type="similarity">
    <text evidence="3">Belongs to the G-protein coupled receptor 2 family.</text>
</comment>
<accession>Q7ZXS8</accession>
<dbReference type="EMBL" id="BC044269">
    <property type="protein sequence ID" value="AAH44269.1"/>
    <property type="molecule type" value="mRNA"/>
</dbReference>
<dbReference type="RefSeq" id="NP_001080206.1">
    <property type="nucleotide sequence ID" value="NM_001086737.1"/>
</dbReference>
<dbReference type="SMR" id="Q7ZXS8"/>
<dbReference type="GlyCosmos" id="Q7ZXS8">
    <property type="glycosylation" value="3 sites, No reported glycans"/>
</dbReference>
<dbReference type="DNASU" id="379898"/>
<dbReference type="GeneID" id="379898"/>
<dbReference type="KEGG" id="xla:379898"/>
<dbReference type="AGR" id="Xenbase:XB-GENE-5736144"/>
<dbReference type="CTD" id="379898"/>
<dbReference type="Xenbase" id="XB-GENE-5736144">
    <property type="gene designation" value="calcrl.L"/>
</dbReference>
<dbReference type="OrthoDB" id="16753at2759"/>
<dbReference type="Proteomes" id="UP000186698">
    <property type="component" value="Chromosome 9_10L"/>
</dbReference>
<dbReference type="Bgee" id="379898">
    <property type="expression patterns" value="Expressed in spleen and 19 other cell types or tissues"/>
</dbReference>
<dbReference type="GO" id="GO:0005886">
    <property type="term" value="C:plasma membrane"/>
    <property type="evidence" value="ECO:0000318"/>
    <property type="project" value="GO_Central"/>
</dbReference>
<dbReference type="GO" id="GO:0001605">
    <property type="term" value="F:adrenomedullin receptor activity"/>
    <property type="evidence" value="ECO:0000318"/>
    <property type="project" value="GO_Central"/>
</dbReference>
<dbReference type="GO" id="GO:0001635">
    <property type="term" value="F:calcitonin gene-related peptide receptor activity"/>
    <property type="evidence" value="ECO:0000318"/>
    <property type="project" value="GO_Central"/>
</dbReference>
<dbReference type="GO" id="GO:0004948">
    <property type="term" value="F:calcitonin receptor activity"/>
    <property type="evidence" value="ECO:0007669"/>
    <property type="project" value="InterPro"/>
</dbReference>
<dbReference type="GO" id="GO:0007189">
    <property type="term" value="P:adenylate cyclase-activating G protein-coupled receptor signaling pathway"/>
    <property type="evidence" value="ECO:0000318"/>
    <property type="project" value="GO_Central"/>
</dbReference>
<dbReference type="GO" id="GO:0001525">
    <property type="term" value="P:angiogenesis"/>
    <property type="evidence" value="ECO:0000318"/>
    <property type="project" value="GO_Central"/>
</dbReference>
<dbReference type="GO" id="GO:0007166">
    <property type="term" value="P:cell surface receptor signaling pathway"/>
    <property type="evidence" value="ECO:0007669"/>
    <property type="project" value="InterPro"/>
</dbReference>
<dbReference type="CDD" id="cd15274">
    <property type="entry name" value="7tmB1_calcitonin_R"/>
    <property type="match status" value="1"/>
</dbReference>
<dbReference type="FunFam" id="1.20.1070.10:FF:000079">
    <property type="entry name" value="Calcitonin gene-related peptide type 1 receptor"/>
    <property type="match status" value="1"/>
</dbReference>
<dbReference type="FunFam" id="4.10.1240.10:FF:000011">
    <property type="entry name" value="Calcitonin gene-related peptide type 1 receptor"/>
    <property type="match status" value="1"/>
</dbReference>
<dbReference type="Gene3D" id="4.10.1240.10">
    <property type="entry name" value="GPCR, family 2, extracellular hormone receptor domain"/>
    <property type="match status" value="1"/>
</dbReference>
<dbReference type="Gene3D" id="1.20.1070.10">
    <property type="entry name" value="Rhodopsin 7-helix transmembrane proteins"/>
    <property type="match status" value="1"/>
</dbReference>
<dbReference type="InterPro" id="IPR050332">
    <property type="entry name" value="GPCR_2"/>
</dbReference>
<dbReference type="InterPro" id="IPR017981">
    <property type="entry name" value="GPCR_2-like_7TM"/>
</dbReference>
<dbReference type="InterPro" id="IPR003287">
    <property type="entry name" value="GPCR_2_calcitonin_rcpt_fam"/>
</dbReference>
<dbReference type="InterPro" id="IPR003289">
    <property type="entry name" value="GPCR_2_CGRP1_rcpt"/>
</dbReference>
<dbReference type="InterPro" id="IPR036445">
    <property type="entry name" value="GPCR_2_extracell_dom_sf"/>
</dbReference>
<dbReference type="InterPro" id="IPR001879">
    <property type="entry name" value="GPCR_2_extracellular_dom"/>
</dbReference>
<dbReference type="InterPro" id="IPR000832">
    <property type="entry name" value="GPCR_2_secretin-like"/>
</dbReference>
<dbReference type="InterPro" id="IPR017983">
    <property type="entry name" value="GPCR_2_secretin-like_CS"/>
</dbReference>
<dbReference type="PANTHER" id="PTHR45620:SF21">
    <property type="entry name" value="CALCITONIN GENE-RELATED PEPTIDE TYPE 1 RECEPTOR"/>
    <property type="match status" value="1"/>
</dbReference>
<dbReference type="PANTHER" id="PTHR45620">
    <property type="entry name" value="PDF RECEPTOR-LIKE PROTEIN-RELATED"/>
    <property type="match status" value="1"/>
</dbReference>
<dbReference type="Pfam" id="PF00002">
    <property type="entry name" value="7tm_2"/>
    <property type="match status" value="1"/>
</dbReference>
<dbReference type="Pfam" id="PF02793">
    <property type="entry name" value="HRM"/>
    <property type="match status" value="1"/>
</dbReference>
<dbReference type="PRINTS" id="PR01351">
    <property type="entry name" value="CGRPRECEPTOR"/>
</dbReference>
<dbReference type="PRINTS" id="PR01350">
    <property type="entry name" value="CTRFAMILY"/>
</dbReference>
<dbReference type="PRINTS" id="PR00249">
    <property type="entry name" value="GPCRSECRETIN"/>
</dbReference>
<dbReference type="SMART" id="SM00008">
    <property type="entry name" value="HormR"/>
    <property type="match status" value="1"/>
</dbReference>
<dbReference type="SUPFAM" id="SSF81321">
    <property type="entry name" value="Family A G protein-coupled receptor-like"/>
    <property type="match status" value="1"/>
</dbReference>
<dbReference type="SUPFAM" id="SSF111418">
    <property type="entry name" value="Hormone receptor domain"/>
    <property type="match status" value="1"/>
</dbReference>
<dbReference type="PROSITE" id="PS00649">
    <property type="entry name" value="G_PROTEIN_RECEP_F2_1"/>
    <property type="match status" value="1"/>
</dbReference>
<dbReference type="PROSITE" id="PS00650">
    <property type="entry name" value="G_PROTEIN_RECEP_F2_2"/>
    <property type="match status" value="1"/>
</dbReference>
<dbReference type="PROSITE" id="PS50227">
    <property type="entry name" value="G_PROTEIN_RECEP_F2_3"/>
    <property type="match status" value="1"/>
</dbReference>
<dbReference type="PROSITE" id="PS50261">
    <property type="entry name" value="G_PROTEIN_RECEP_F2_4"/>
    <property type="match status" value="1"/>
</dbReference>